<name>RML2_SCHPO</name>
<reference key="1">
    <citation type="journal article" date="2002" name="Nature">
        <title>The genome sequence of Schizosaccharomyces pombe.</title>
        <authorList>
            <person name="Wood V."/>
            <person name="Gwilliam R."/>
            <person name="Rajandream M.A."/>
            <person name="Lyne M.H."/>
            <person name="Lyne R."/>
            <person name="Stewart A."/>
            <person name="Sgouros J.G."/>
            <person name="Peat N."/>
            <person name="Hayles J."/>
            <person name="Baker S.G."/>
            <person name="Basham D."/>
            <person name="Bowman S."/>
            <person name="Brooks K."/>
            <person name="Brown D."/>
            <person name="Brown S."/>
            <person name="Chillingworth T."/>
            <person name="Churcher C.M."/>
            <person name="Collins M."/>
            <person name="Connor R."/>
            <person name="Cronin A."/>
            <person name="Davis P."/>
            <person name="Feltwell T."/>
            <person name="Fraser A."/>
            <person name="Gentles S."/>
            <person name="Goble A."/>
            <person name="Hamlin N."/>
            <person name="Harris D.E."/>
            <person name="Hidalgo J."/>
            <person name="Hodgson G."/>
            <person name="Holroyd S."/>
            <person name="Hornsby T."/>
            <person name="Howarth S."/>
            <person name="Huckle E.J."/>
            <person name="Hunt S."/>
            <person name="Jagels K."/>
            <person name="James K.D."/>
            <person name="Jones L."/>
            <person name="Jones M."/>
            <person name="Leather S."/>
            <person name="McDonald S."/>
            <person name="McLean J."/>
            <person name="Mooney P."/>
            <person name="Moule S."/>
            <person name="Mungall K.L."/>
            <person name="Murphy L.D."/>
            <person name="Niblett D."/>
            <person name="Odell C."/>
            <person name="Oliver K."/>
            <person name="O'Neil S."/>
            <person name="Pearson D."/>
            <person name="Quail M.A."/>
            <person name="Rabbinowitsch E."/>
            <person name="Rutherford K.M."/>
            <person name="Rutter S."/>
            <person name="Saunders D."/>
            <person name="Seeger K."/>
            <person name="Sharp S."/>
            <person name="Skelton J."/>
            <person name="Simmonds M.N."/>
            <person name="Squares R."/>
            <person name="Squares S."/>
            <person name="Stevens K."/>
            <person name="Taylor K."/>
            <person name="Taylor R.G."/>
            <person name="Tivey A."/>
            <person name="Walsh S.V."/>
            <person name="Warren T."/>
            <person name="Whitehead S."/>
            <person name="Woodward J.R."/>
            <person name="Volckaert G."/>
            <person name="Aert R."/>
            <person name="Robben J."/>
            <person name="Grymonprez B."/>
            <person name="Weltjens I."/>
            <person name="Vanstreels E."/>
            <person name="Rieger M."/>
            <person name="Schaefer M."/>
            <person name="Mueller-Auer S."/>
            <person name="Gabel C."/>
            <person name="Fuchs M."/>
            <person name="Duesterhoeft A."/>
            <person name="Fritzc C."/>
            <person name="Holzer E."/>
            <person name="Moestl D."/>
            <person name="Hilbert H."/>
            <person name="Borzym K."/>
            <person name="Langer I."/>
            <person name="Beck A."/>
            <person name="Lehrach H."/>
            <person name="Reinhardt R."/>
            <person name="Pohl T.M."/>
            <person name="Eger P."/>
            <person name="Zimmermann W."/>
            <person name="Wedler H."/>
            <person name="Wambutt R."/>
            <person name="Purnelle B."/>
            <person name="Goffeau A."/>
            <person name="Cadieu E."/>
            <person name="Dreano S."/>
            <person name="Gloux S."/>
            <person name="Lelaure V."/>
            <person name="Mottier S."/>
            <person name="Galibert F."/>
            <person name="Aves S.J."/>
            <person name="Xiang Z."/>
            <person name="Hunt C."/>
            <person name="Moore K."/>
            <person name="Hurst S.M."/>
            <person name="Lucas M."/>
            <person name="Rochet M."/>
            <person name="Gaillardin C."/>
            <person name="Tallada V.A."/>
            <person name="Garzon A."/>
            <person name="Thode G."/>
            <person name="Daga R.R."/>
            <person name="Cruzado L."/>
            <person name="Jimenez J."/>
            <person name="Sanchez M."/>
            <person name="del Rey F."/>
            <person name="Benito J."/>
            <person name="Dominguez A."/>
            <person name="Revuelta J.L."/>
            <person name="Moreno S."/>
            <person name="Armstrong J."/>
            <person name="Forsburg S.L."/>
            <person name="Cerutti L."/>
            <person name="Lowe T."/>
            <person name="McCombie W.R."/>
            <person name="Paulsen I."/>
            <person name="Potashkin J."/>
            <person name="Shpakovski G.V."/>
            <person name="Ussery D."/>
            <person name="Barrell B.G."/>
            <person name="Nurse P."/>
        </authorList>
    </citation>
    <scope>NUCLEOTIDE SEQUENCE [LARGE SCALE GENOMIC DNA]</scope>
    <source>
        <strain>972 / ATCC 24843</strain>
    </source>
</reference>
<reference key="2">
    <citation type="journal article" date="2011" name="Science">
        <title>Comparative functional genomics of the fission yeasts.</title>
        <authorList>
            <person name="Rhind N."/>
            <person name="Chen Z."/>
            <person name="Yassour M."/>
            <person name="Thompson D.A."/>
            <person name="Haas B.J."/>
            <person name="Habib N."/>
            <person name="Wapinski I."/>
            <person name="Roy S."/>
            <person name="Lin M.F."/>
            <person name="Heiman D.I."/>
            <person name="Young S.K."/>
            <person name="Furuya K."/>
            <person name="Guo Y."/>
            <person name="Pidoux A."/>
            <person name="Chen H.M."/>
            <person name="Robbertse B."/>
            <person name="Goldberg J.M."/>
            <person name="Aoki K."/>
            <person name="Bayne E.H."/>
            <person name="Berlin A.M."/>
            <person name="Desjardins C.A."/>
            <person name="Dobbs E."/>
            <person name="Dukaj L."/>
            <person name="Fan L."/>
            <person name="FitzGerald M.G."/>
            <person name="French C."/>
            <person name="Gujja S."/>
            <person name="Hansen K."/>
            <person name="Keifenheim D."/>
            <person name="Levin J.Z."/>
            <person name="Mosher R.A."/>
            <person name="Mueller C.A."/>
            <person name="Pfiffner J."/>
            <person name="Priest M."/>
            <person name="Russ C."/>
            <person name="Smialowska A."/>
            <person name="Swoboda P."/>
            <person name="Sykes S.M."/>
            <person name="Vaughn M."/>
            <person name="Vengrova S."/>
            <person name="Yoder R."/>
            <person name="Zeng Q."/>
            <person name="Allshire R."/>
            <person name="Baulcombe D."/>
            <person name="Birren B.W."/>
            <person name="Brown W."/>
            <person name="Ekwall K."/>
            <person name="Kellis M."/>
            <person name="Leatherwood J."/>
            <person name="Levin H."/>
            <person name="Margalit H."/>
            <person name="Martienssen R."/>
            <person name="Nieduszynski C.A."/>
            <person name="Spatafora J.W."/>
            <person name="Friedman N."/>
            <person name="Dalgaard J.Z."/>
            <person name="Baumann P."/>
            <person name="Niki H."/>
            <person name="Regev A."/>
            <person name="Nusbaum C."/>
        </authorList>
    </citation>
    <scope>REVISION OF GENE MODEL</scope>
</reference>
<dbReference type="EMBL" id="CU329672">
    <property type="protein sequence ID" value="CAB38631.2"/>
    <property type="molecule type" value="Genomic_DNA"/>
</dbReference>
<dbReference type="PIR" id="T41105">
    <property type="entry name" value="T41105"/>
</dbReference>
<dbReference type="RefSeq" id="NP_587925.2">
    <property type="nucleotide sequence ID" value="NM_001022916.2"/>
</dbReference>
<dbReference type="SMR" id="Q9Y7P4"/>
<dbReference type="BioGRID" id="275887">
    <property type="interactions" value="3"/>
</dbReference>
<dbReference type="ComplexPortal" id="CPX-10323">
    <property type="entry name" value="54S mitochondrial large ribosomal subunit"/>
</dbReference>
<dbReference type="FunCoup" id="Q9Y7P4">
    <property type="interactions" value="136"/>
</dbReference>
<dbReference type="STRING" id="284812.Q9Y7P4"/>
<dbReference type="PaxDb" id="4896-SPCC16C4.15.1"/>
<dbReference type="EnsemblFungi" id="SPCC16C4.15.1">
    <property type="protein sequence ID" value="SPCC16C4.15.1:pep"/>
    <property type="gene ID" value="SPCC16C4.15"/>
</dbReference>
<dbReference type="GeneID" id="2539321"/>
<dbReference type="KEGG" id="spo:2539321"/>
<dbReference type="PomBase" id="SPCC16C4.15">
    <property type="gene designation" value="rml2"/>
</dbReference>
<dbReference type="VEuPathDB" id="FungiDB:SPCC16C4.15"/>
<dbReference type="eggNOG" id="KOG0438">
    <property type="taxonomic scope" value="Eukaryota"/>
</dbReference>
<dbReference type="HOGENOM" id="CLU_036235_3_0_1"/>
<dbReference type="InParanoid" id="Q9Y7P4"/>
<dbReference type="OMA" id="TAQRGNC"/>
<dbReference type="PRO" id="PR:Q9Y7P4"/>
<dbReference type="Proteomes" id="UP000002485">
    <property type="component" value="Chromosome III"/>
</dbReference>
<dbReference type="GO" id="GO:0005762">
    <property type="term" value="C:mitochondrial large ribosomal subunit"/>
    <property type="evidence" value="ECO:0000318"/>
    <property type="project" value="GO_Central"/>
</dbReference>
<dbReference type="GO" id="GO:0003723">
    <property type="term" value="F:RNA binding"/>
    <property type="evidence" value="ECO:0000318"/>
    <property type="project" value="GO_Central"/>
</dbReference>
<dbReference type="GO" id="GO:0003735">
    <property type="term" value="F:structural constituent of ribosome"/>
    <property type="evidence" value="ECO:0000318"/>
    <property type="project" value="GO_Central"/>
</dbReference>
<dbReference type="GO" id="GO:0016740">
    <property type="term" value="F:transferase activity"/>
    <property type="evidence" value="ECO:0007669"/>
    <property type="project" value="InterPro"/>
</dbReference>
<dbReference type="GO" id="GO:0032543">
    <property type="term" value="P:mitochondrial translation"/>
    <property type="evidence" value="ECO:0000318"/>
    <property type="project" value="GO_Central"/>
</dbReference>
<dbReference type="FunFam" id="2.30.30.30:FF:000001">
    <property type="entry name" value="50S ribosomal protein L2"/>
    <property type="match status" value="1"/>
</dbReference>
<dbReference type="FunFam" id="2.40.50.140:FF:000128">
    <property type="entry name" value="50S ribosomal protein L2"/>
    <property type="match status" value="1"/>
</dbReference>
<dbReference type="FunFam" id="4.10.950.10:FF:000001">
    <property type="entry name" value="50S ribosomal protein L2"/>
    <property type="match status" value="1"/>
</dbReference>
<dbReference type="Gene3D" id="2.30.30.30">
    <property type="match status" value="1"/>
</dbReference>
<dbReference type="Gene3D" id="2.40.50.140">
    <property type="entry name" value="Nucleic acid-binding proteins"/>
    <property type="match status" value="1"/>
</dbReference>
<dbReference type="Gene3D" id="4.10.950.10">
    <property type="entry name" value="Ribosomal protein L2, domain 3"/>
    <property type="match status" value="1"/>
</dbReference>
<dbReference type="InterPro" id="IPR012340">
    <property type="entry name" value="NA-bd_OB-fold"/>
</dbReference>
<dbReference type="InterPro" id="IPR014722">
    <property type="entry name" value="Rib_uL2_dom2"/>
</dbReference>
<dbReference type="InterPro" id="IPR002171">
    <property type="entry name" value="Ribosomal_uL2"/>
</dbReference>
<dbReference type="InterPro" id="IPR005880">
    <property type="entry name" value="Ribosomal_uL2_bac/org-type"/>
</dbReference>
<dbReference type="InterPro" id="IPR022669">
    <property type="entry name" value="Ribosomal_uL2_C"/>
</dbReference>
<dbReference type="InterPro" id="IPR022671">
    <property type="entry name" value="Ribosomal_uL2_CS"/>
</dbReference>
<dbReference type="InterPro" id="IPR014726">
    <property type="entry name" value="Ribosomal_uL2_dom3"/>
</dbReference>
<dbReference type="InterPro" id="IPR022666">
    <property type="entry name" value="Ribosomal_uL2_RNA-bd_dom"/>
</dbReference>
<dbReference type="InterPro" id="IPR008991">
    <property type="entry name" value="Translation_prot_SH3-like_sf"/>
</dbReference>
<dbReference type="NCBIfam" id="TIGR01171">
    <property type="entry name" value="rplB_bact"/>
    <property type="match status" value="1"/>
</dbReference>
<dbReference type="PANTHER" id="PTHR13691:SF5">
    <property type="entry name" value="LARGE RIBOSOMAL SUBUNIT PROTEIN UL2M"/>
    <property type="match status" value="1"/>
</dbReference>
<dbReference type="PANTHER" id="PTHR13691">
    <property type="entry name" value="RIBOSOMAL PROTEIN L2"/>
    <property type="match status" value="1"/>
</dbReference>
<dbReference type="Pfam" id="PF00181">
    <property type="entry name" value="Ribosomal_L2"/>
    <property type="match status" value="1"/>
</dbReference>
<dbReference type="Pfam" id="PF03947">
    <property type="entry name" value="Ribosomal_L2_C"/>
    <property type="match status" value="1"/>
</dbReference>
<dbReference type="SMART" id="SM01383">
    <property type="entry name" value="Ribosomal_L2"/>
    <property type="match status" value="1"/>
</dbReference>
<dbReference type="SMART" id="SM01382">
    <property type="entry name" value="Ribosomal_L2_C"/>
    <property type="match status" value="1"/>
</dbReference>
<dbReference type="SUPFAM" id="SSF50249">
    <property type="entry name" value="Nucleic acid-binding proteins"/>
    <property type="match status" value="1"/>
</dbReference>
<dbReference type="SUPFAM" id="SSF50104">
    <property type="entry name" value="Translation proteins SH3-like domain"/>
    <property type="match status" value="1"/>
</dbReference>
<dbReference type="PROSITE" id="PS00467">
    <property type="entry name" value="RIBOSOMAL_L2"/>
    <property type="match status" value="1"/>
</dbReference>
<gene>
    <name type="primary">rml2</name>
    <name type="ORF">SPCC16C4.15</name>
</gene>
<sequence>MLSYNRFRGYLIPQIHALKLFRYASTASTSGEKIESSERPYDVGMLLRPKTKFEIKTYKPISPGLRHLKRPVSDYLWKGKPFRPLTVAKRKKGGRNETGRITVRHQGGGHKQRIRLVDFERKVPGVHRVIRIEYDPGRSGHIALVEKLNSETANKSYILACDGLREGDTVESFRSLLKTGSNGEPVEMDPVLAAEIEDGTFAAKNLKPGNCFPLRLIPIGTVIHAIGVNPNQKAKLCRSAGSSARIIAFDGKYAIVRLQSGEERKILDTSFATIGVVSNIYWQHRQLGKAGRSRWLGIRPTVRGTAMNPCDHPHGGGGGKSIGNKPSQSPWGVLAKGGYKTRRGKNVNKLLVRDRPRGKEKR</sequence>
<comment type="function">
    <text evidence="1">Component of the mitochondrial ribosome (mitoribosome), a dedicated translation machinery responsible for the synthesis of mitochondrial genome-encoded proteins, including at least some of the essential transmembrane subunits of the mitochondrial respiratory chain. The mitoribosomes are attached to the mitochondrial inner membrane and translation products are cotranslationally integrated into the membrane.</text>
</comment>
<comment type="subunit">
    <text evidence="1">Component of the mitochondrial large ribosomal subunit (mt-LSU). Mature yeast 74S mitochondrial ribosomes consist of a small (37S) and a large (54S) subunit. The 37S small subunit contains a 15S ribosomal RNA (15S mt-rRNA) and at least 32 different proteins. The 54S large subunit contains a 21S rRNA (21S mt-rRNA) and at least 45 different proteins. uL2m has a Na/K ligand binding site.</text>
</comment>
<comment type="subcellular location">
    <subcellularLocation>
        <location evidence="1">Mitochondrion</location>
    </subcellularLocation>
</comment>
<comment type="similarity">
    <text evidence="2">Belongs to the universal ribosomal protein uL2 family.</text>
</comment>
<organism>
    <name type="scientific">Schizosaccharomyces pombe (strain 972 / ATCC 24843)</name>
    <name type="common">Fission yeast</name>
    <dbReference type="NCBI Taxonomy" id="284812"/>
    <lineage>
        <taxon>Eukaryota</taxon>
        <taxon>Fungi</taxon>
        <taxon>Dikarya</taxon>
        <taxon>Ascomycota</taxon>
        <taxon>Taphrinomycotina</taxon>
        <taxon>Schizosaccharomycetes</taxon>
        <taxon>Schizosaccharomycetales</taxon>
        <taxon>Schizosaccharomycetaceae</taxon>
        <taxon>Schizosaccharomyces</taxon>
    </lineage>
</organism>
<accession>Q9Y7P4</accession>
<feature type="transit peptide" description="Mitochondrion" evidence="2">
    <location>
        <begin position="1"/>
        <end position="23"/>
    </location>
</feature>
<feature type="chain" id="PRO_0000318134" description="Large ribosomal subunit protein uL2m">
    <location>
        <begin position="24"/>
        <end position="362"/>
    </location>
</feature>
<feature type="region of interest" description="Disordered" evidence="3">
    <location>
        <begin position="306"/>
        <end position="362"/>
    </location>
</feature>
<feature type="compositionally biased region" description="Basic and acidic residues" evidence="3">
    <location>
        <begin position="351"/>
        <end position="362"/>
    </location>
</feature>
<evidence type="ECO:0000250" key="1">
    <source>
        <dbReference type="UniProtKB" id="P32611"/>
    </source>
</evidence>
<evidence type="ECO:0000255" key="2"/>
<evidence type="ECO:0000256" key="3">
    <source>
        <dbReference type="SAM" id="MobiDB-lite"/>
    </source>
</evidence>
<evidence type="ECO:0000305" key="4"/>
<proteinExistence type="inferred from homology"/>
<protein>
    <recommendedName>
        <fullName evidence="4">Large ribosomal subunit protein uL2m</fullName>
    </recommendedName>
    <alternativeName>
        <fullName>54S ribosomal protein rml2, mitochondrial</fullName>
        <shortName>L2</shortName>
    </alternativeName>
</protein>
<keyword id="KW-0496">Mitochondrion</keyword>
<keyword id="KW-1185">Reference proteome</keyword>
<keyword id="KW-0687">Ribonucleoprotein</keyword>
<keyword id="KW-0689">Ribosomal protein</keyword>
<keyword id="KW-0809">Transit peptide</keyword>